<sequence length="415" mass="47130">MGSLGAILKHPDDFYPLLKLKIAARHAEKQIPSEPHWAFCYSMLHKVSRSFGLVIQQLGPQLRDAVCIFYLVLRALDTVEDDTSISTEVKVPILMAFHRHIYDNDWHFSCGTKEYKVLMDEFHHVSNAFLDLGSGYKEAIEDITMRMGAGMAKFICKEVETIDDYDEYCHYVAGLVGLGLSKLFHASGAEDLATDSLSNSMGLFLQKTNIIRDYLEDINEIPKSRMFWPRQIWSKYVDKLEDLKYEENSGKAVQCLNDMVTNALLHVEDCLKYMSDLRDPAIFRFCAIPQIMSIGTLALCYNNIQVFRGVVKMRRGLTAKVIDRTNTMSDVYGAFFDFSCMLKSKVDNNDPNATKTLSRLEAIQKICKNSGALTTKRKSYIIENESGYNSTLIVILFIILAILYAYLSSNLPNSL</sequence>
<feature type="chain" id="PRO_0000446953" description="Squalene synthase 2">
    <location>
        <begin position="1"/>
        <end position="415"/>
    </location>
</feature>
<feature type="transmembrane region" description="Helical" evidence="3">
    <location>
        <begin position="281"/>
        <end position="301"/>
    </location>
</feature>
<feature type="transmembrane region" description="Helical" evidence="3">
    <location>
        <begin position="392"/>
        <end position="412"/>
    </location>
</feature>
<comment type="function">
    <text evidence="1 4">Component of the triterpene saponins (e.g. ginsenosides or panaxosides) and phytosterols biosynthetic pathways (PubMed:29378087). Catalyzes the biosynthesis of squalene (By similarity).</text>
</comment>
<comment type="catalytic activity">
    <reaction evidence="2">
        <text>2 (2E,6E)-farnesyl diphosphate + NADH + H(+) = squalene + 2 diphosphate + NAD(+)</text>
        <dbReference type="Rhea" id="RHEA:32299"/>
        <dbReference type="ChEBI" id="CHEBI:15378"/>
        <dbReference type="ChEBI" id="CHEBI:15440"/>
        <dbReference type="ChEBI" id="CHEBI:33019"/>
        <dbReference type="ChEBI" id="CHEBI:57540"/>
        <dbReference type="ChEBI" id="CHEBI:57945"/>
        <dbReference type="ChEBI" id="CHEBI:175763"/>
        <dbReference type="EC" id="2.5.1.21"/>
    </reaction>
    <physiologicalReaction direction="left-to-right" evidence="5">
        <dbReference type="Rhea" id="RHEA:32300"/>
    </physiologicalReaction>
</comment>
<comment type="catalytic activity">
    <reaction evidence="2">
        <text>2 (2E,6E)-farnesyl diphosphate + NADPH + H(+) = squalene + 2 diphosphate + NADP(+)</text>
        <dbReference type="Rhea" id="RHEA:32295"/>
        <dbReference type="ChEBI" id="CHEBI:15378"/>
        <dbReference type="ChEBI" id="CHEBI:15440"/>
        <dbReference type="ChEBI" id="CHEBI:33019"/>
        <dbReference type="ChEBI" id="CHEBI:57783"/>
        <dbReference type="ChEBI" id="CHEBI:58349"/>
        <dbReference type="ChEBI" id="CHEBI:175763"/>
        <dbReference type="EC" id="2.5.1.21"/>
    </reaction>
    <physiologicalReaction direction="left-to-right" evidence="5">
        <dbReference type="Rhea" id="RHEA:32296"/>
    </physiologicalReaction>
</comment>
<comment type="cofactor">
    <cofactor evidence="2">
        <name>Mg(2+)</name>
        <dbReference type="ChEBI" id="CHEBI:18420"/>
    </cofactor>
    <cofactor evidence="2">
        <name>Mn(2+)</name>
        <dbReference type="ChEBI" id="CHEBI:29035"/>
    </cofactor>
</comment>
<comment type="pathway">
    <text evidence="2">Terpene metabolism; lanosterol biosynthesis; lanosterol from farnesyl diphosphate: step 1/3.</text>
</comment>
<comment type="subcellular location">
    <subcellularLocation>
        <location evidence="2">Endoplasmic reticulum membrane</location>
        <topology evidence="3">Multi-pass membrane protein</topology>
    </subcellularLocation>
</comment>
<comment type="similarity">
    <text evidence="7">Belongs to the phytoene/squalene synthase family.</text>
</comment>
<organism>
    <name type="scientific">Panax ginseng</name>
    <name type="common">Korean ginseng</name>
    <dbReference type="NCBI Taxonomy" id="4054"/>
    <lineage>
        <taxon>Eukaryota</taxon>
        <taxon>Viridiplantae</taxon>
        <taxon>Streptophyta</taxon>
        <taxon>Embryophyta</taxon>
        <taxon>Tracheophyta</taxon>
        <taxon>Spermatophyta</taxon>
        <taxon>Magnoliopsida</taxon>
        <taxon>eudicotyledons</taxon>
        <taxon>Gunneridae</taxon>
        <taxon>Pentapetalae</taxon>
        <taxon>asterids</taxon>
        <taxon>campanulids</taxon>
        <taxon>Apiales</taxon>
        <taxon>Araliaceae</taxon>
        <taxon>Panax</taxon>
    </lineage>
</organism>
<protein>
    <recommendedName>
        <fullName evidence="5 6">Squalene synthase 2</fullName>
        <shortName evidence="5 6">PgSS2</shortName>
        <shortName evidence="7">SQS 2</shortName>
        <ecNumber evidence="2">2.5.1.21</ecNumber>
    </recommendedName>
    <alternativeName>
        <fullName evidence="7">FPP:FPP farnesyltransferase SS2</fullName>
    </alternativeName>
    <alternativeName>
        <fullName evidence="7">Farnesyl-diphosphate farnesyltransferase SS2</fullName>
    </alternativeName>
</protein>
<proteinExistence type="evidence at transcript level"/>
<accession>C9E894</accession>
<reference key="1">
    <citation type="submission" date="2009-12" db="EMBL/GenBank/DDBJ databases">
        <title>Isolation and characterization of squalene synthase gene (PgSS2) in Panax ginseng.</title>
        <authorList>
            <person name="Kim T.D."/>
            <person name="Han J.Y."/>
            <person name="Choi Y.E."/>
        </authorList>
    </citation>
    <scope>NUCLEOTIDE SEQUENCE [MRNA]</scope>
</reference>
<reference key="2">
    <citation type="journal article" date="2018" name="Biotechnol. Appl. Biochem.">
        <title>Advances in ginsenoside biosynthesis and metabolic regulation.</title>
        <authorList>
            <person name="Lu J."/>
            <person name="Li J."/>
            <person name="Wang S."/>
            <person name="Yao L."/>
            <person name="Liang W."/>
            <person name="Wang J."/>
            <person name="Gao W."/>
        </authorList>
    </citation>
    <scope>REVIEW</scope>
</reference>
<reference key="3">
    <citation type="journal article" date="2018" name="Molecules">
        <title>Progress on the studies of the key enzymes of ginsenoside biosynthesis.</title>
        <authorList>
            <person name="Yang J.-L."/>
            <person name="Hu Z.-F."/>
            <person name="Zhang T.-T."/>
            <person name="Gu A.-D."/>
            <person name="Gong T."/>
            <person name="Zhu P."/>
        </authorList>
    </citation>
    <scope>REVIEW</scope>
    <scope>NOMENCLATURE</scope>
</reference>
<dbReference type="EC" id="2.5.1.21" evidence="2"/>
<dbReference type="EMBL" id="GQ468527">
    <property type="protein sequence ID" value="ACV88718.1"/>
    <property type="molecule type" value="mRNA"/>
</dbReference>
<dbReference type="SMR" id="C9E894"/>
<dbReference type="UniPathway" id="UPA00767">
    <property type="reaction ID" value="UER00751"/>
</dbReference>
<dbReference type="GO" id="GO:0005789">
    <property type="term" value="C:endoplasmic reticulum membrane"/>
    <property type="evidence" value="ECO:0007669"/>
    <property type="project" value="UniProtKB-SubCell"/>
</dbReference>
<dbReference type="GO" id="GO:0051996">
    <property type="term" value="F:squalene synthase [NAD(P)H] activity"/>
    <property type="evidence" value="ECO:0007669"/>
    <property type="project" value="UniProtKB-EC"/>
</dbReference>
<dbReference type="GO" id="GO:0045338">
    <property type="term" value="P:farnesyl diphosphate metabolic process"/>
    <property type="evidence" value="ECO:0007669"/>
    <property type="project" value="InterPro"/>
</dbReference>
<dbReference type="GO" id="GO:0008299">
    <property type="term" value="P:isoprenoid biosynthetic process"/>
    <property type="evidence" value="ECO:0007669"/>
    <property type="project" value="UniProtKB-KW"/>
</dbReference>
<dbReference type="GO" id="GO:0009753">
    <property type="term" value="P:response to jasmonic acid"/>
    <property type="evidence" value="ECO:0007669"/>
    <property type="project" value="UniProtKB-ARBA"/>
</dbReference>
<dbReference type="CDD" id="cd00683">
    <property type="entry name" value="Trans_IPPS_HH"/>
    <property type="match status" value="1"/>
</dbReference>
<dbReference type="FunFam" id="1.10.600.10:FF:000012">
    <property type="entry name" value="Squalene synthase 1"/>
    <property type="match status" value="1"/>
</dbReference>
<dbReference type="Gene3D" id="1.10.600.10">
    <property type="entry name" value="Farnesyl Diphosphate Synthase"/>
    <property type="match status" value="1"/>
</dbReference>
<dbReference type="InterPro" id="IPR008949">
    <property type="entry name" value="Isoprenoid_synthase_dom_sf"/>
</dbReference>
<dbReference type="InterPro" id="IPR002060">
    <property type="entry name" value="Squ/phyt_synthse"/>
</dbReference>
<dbReference type="InterPro" id="IPR006449">
    <property type="entry name" value="Squal_synth-like"/>
</dbReference>
<dbReference type="InterPro" id="IPR019845">
    <property type="entry name" value="Squalene/phytoene_synthase_CS"/>
</dbReference>
<dbReference type="InterPro" id="IPR044844">
    <property type="entry name" value="Trans_IPPS_euk-type"/>
</dbReference>
<dbReference type="InterPro" id="IPR033904">
    <property type="entry name" value="Trans_IPPS_HH"/>
</dbReference>
<dbReference type="NCBIfam" id="TIGR01559">
    <property type="entry name" value="squal_synth"/>
    <property type="match status" value="1"/>
</dbReference>
<dbReference type="PANTHER" id="PTHR11626">
    <property type="entry name" value="FARNESYL-DIPHOSPHATE FARNESYLTRANSFERASE"/>
    <property type="match status" value="1"/>
</dbReference>
<dbReference type="PANTHER" id="PTHR11626:SF2">
    <property type="entry name" value="SQUALENE SYNTHASE"/>
    <property type="match status" value="1"/>
</dbReference>
<dbReference type="Pfam" id="PF00494">
    <property type="entry name" value="SQS_PSY"/>
    <property type="match status" value="1"/>
</dbReference>
<dbReference type="SFLD" id="SFLDS00005">
    <property type="entry name" value="Isoprenoid_Synthase_Type_I"/>
    <property type="match status" value="1"/>
</dbReference>
<dbReference type="SFLD" id="SFLDG01018">
    <property type="entry name" value="Squalene/Phytoene_Synthase_Lik"/>
    <property type="match status" value="1"/>
</dbReference>
<dbReference type="SUPFAM" id="SSF48576">
    <property type="entry name" value="Terpenoid synthases"/>
    <property type="match status" value="1"/>
</dbReference>
<dbReference type="PROSITE" id="PS01044">
    <property type="entry name" value="SQUALEN_PHYTOEN_SYN_1"/>
    <property type="match status" value="1"/>
</dbReference>
<dbReference type="PROSITE" id="PS01045">
    <property type="entry name" value="SQUALEN_PHYTOEN_SYN_2"/>
    <property type="match status" value="1"/>
</dbReference>
<gene>
    <name evidence="6" type="primary">SS2</name>
</gene>
<name>SQS2_PANGI</name>
<evidence type="ECO:0000250" key="1">
    <source>
        <dbReference type="UniProtKB" id="O48666"/>
    </source>
</evidence>
<evidence type="ECO:0000250" key="2">
    <source>
        <dbReference type="UniProtKB" id="P53799"/>
    </source>
</evidence>
<evidence type="ECO:0000255" key="3"/>
<evidence type="ECO:0000303" key="4">
    <source>
    </source>
</evidence>
<evidence type="ECO:0000303" key="5">
    <source>
    </source>
</evidence>
<evidence type="ECO:0000303" key="6">
    <source ref="1"/>
</evidence>
<evidence type="ECO:0000305" key="7"/>
<keyword id="KW-0256">Endoplasmic reticulum</keyword>
<keyword id="KW-0414">Isoprene biosynthesis</keyword>
<keyword id="KW-0472">Membrane</keyword>
<keyword id="KW-0808">Transferase</keyword>
<keyword id="KW-0812">Transmembrane</keyword>
<keyword id="KW-1133">Transmembrane helix</keyword>